<protein>
    <recommendedName>
        <fullName evidence="1">Glucans biosynthesis glucosyltransferase H</fullName>
        <ecNumber evidence="1">2.4.1.-</ecNumber>
    </recommendedName>
</protein>
<organism>
    <name type="scientific">Xanthomonas oryzae pv. oryzae (strain MAFF 311018)</name>
    <dbReference type="NCBI Taxonomy" id="342109"/>
    <lineage>
        <taxon>Bacteria</taxon>
        <taxon>Pseudomonadati</taxon>
        <taxon>Pseudomonadota</taxon>
        <taxon>Gammaproteobacteria</taxon>
        <taxon>Lysobacterales</taxon>
        <taxon>Lysobacteraceae</taxon>
        <taxon>Xanthomonas</taxon>
    </lineage>
</organism>
<gene>
    <name evidence="1" type="primary">opgH</name>
    <name type="ordered locus">XOO3782</name>
</gene>
<feature type="chain" id="PRO_1000064621" description="Glucans biosynthesis glucosyltransferase H">
    <location>
        <begin position="1"/>
        <end position="645"/>
    </location>
</feature>
<feature type="transmembrane region" description="Helical" evidence="1">
    <location>
        <begin position="64"/>
        <end position="84"/>
    </location>
</feature>
<feature type="transmembrane region" description="Helical" evidence="1">
    <location>
        <begin position="98"/>
        <end position="118"/>
    </location>
</feature>
<feature type="transmembrane region" description="Helical" evidence="1">
    <location>
        <begin position="423"/>
        <end position="443"/>
    </location>
</feature>
<feature type="transmembrane region" description="Helical" evidence="1">
    <location>
        <begin position="465"/>
        <end position="485"/>
    </location>
</feature>
<feature type="transmembrane region" description="Helical" evidence="1">
    <location>
        <begin position="504"/>
        <end position="524"/>
    </location>
</feature>
<feature type="transmembrane region" description="Helical" evidence="1">
    <location>
        <begin position="559"/>
        <end position="579"/>
    </location>
</feature>
<feature type="transmembrane region" description="Helical" evidence="1">
    <location>
        <begin position="580"/>
        <end position="600"/>
    </location>
</feature>
<feature type="region of interest" description="Disordered" evidence="2">
    <location>
        <begin position="1"/>
        <end position="22"/>
    </location>
</feature>
<feature type="compositionally biased region" description="Polar residues" evidence="2">
    <location>
        <begin position="1"/>
        <end position="12"/>
    </location>
</feature>
<sequence length="645" mass="70307">MDGTVTLSSTPTAIPPVSALDAGKPTLPPEAPLAMPEQNLREGSLQVRHQRTSPPGIGMRRFYLIGGTFAATAVAVWVMLSVLWPDGISVLEGCLLCLFTLLFAWIAMSFASAVAGFVTVVARAGRKLGIDPEEPLPTLRSRTALLMPTYNEDPRRLLAGLQAIYESVAETGQLEHFDFFVLSDTTREHIGRAEELVYSELCDRVDGHGRIFYRRRADNAARKAGNVADWVRRFGGRYPQMLILDADSVMTGDTIVRLVAGMENNPDVGLIQTLPAVVNGQTLFARMQQFGGRVYGPIIAFGVAWWHGAESNYWGHNAIIRTHAFADHAGLPSLRGRKPFGGHVLSHDFVEAALMRRGGWAMHMVPYLQGSYEEGPPTLTDLLIRDRRWCQGNLQHAKVVSAKGLHWISRMHMLIGIGHYFTAPMWGLLMLIGIGIPLAGVGIDLAGDLPFSPARYWHGSSQGNAIWIFICTMFVLLAPKLLGYIALLLNPRELRACGGAFRAAVSILLETVLAALMAPVVMYLQSRGVFEVLAGKDSGWDAQVRDDGKLSWPALLRSYGGLTVFGLFMGAVAYAVSPALAAWMGPVIVGMALSIPVVALTSLRRTGMALRRAGIFCIPEELDPPKVLVRASELRRAAVLEPSLI</sequence>
<comment type="function">
    <text evidence="1">Involved in the biosynthesis of osmoregulated periplasmic glucans (OPGs).</text>
</comment>
<comment type="pathway">
    <text evidence="1">Glycan metabolism; osmoregulated periplasmic glucan (OPG) biosynthesis.</text>
</comment>
<comment type="subcellular location">
    <subcellularLocation>
        <location evidence="1">Cell inner membrane</location>
        <topology evidence="1">Multi-pass membrane protein</topology>
    </subcellularLocation>
</comment>
<comment type="similarity">
    <text evidence="1">Belongs to the glycosyltransferase 2 family. OpgH subfamily.</text>
</comment>
<reference key="1">
    <citation type="journal article" date="2005" name="Jpn. Agric. Res. Q.">
        <title>Genome sequence of Xanthomonas oryzae pv. oryzae suggests contribution of large numbers of effector genes and insertion sequences to its race diversity.</title>
        <authorList>
            <person name="Ochiai H."/>
            <person name="Inoue Y."/>
            <person name="Takeya M."/>
            <person name="Sasaki A."/>
            <person name="Kaku H."/>
        </authorList>
    </citation>
    <scope>NUCLEOTIDE SEQUENCE [LARGE SCALE GENOMIC DNA]</scope>
    <source>
        <strain>MAFF 311018</strain>
    </source>
</reference>
<keyword id="KW-0997">Cell inner membrane</keyword>
<keyword id="KW-1003">Cell membrane</keyword>
<keyword id="KW-0328">Glycosyltransferase</keyword>
<keyword id="KW-0472">Membrane</keyword>
<keyword id="KW-0808">Transferase</keyword>
<keyword id="KW-0812">Transmembrane</keyword>
<keyword id="KW-1133">Transmembrane helix</keyword>
<dbReference type="EC" id="2.4.1.-" evidence="1"/>
<dbReference type="EMBL" id="AP008229">
    <property type="protein sequence ID" value="BAE70537.1"/>
    <property type="molecule type" value="Genomic_DNA"/>
</dbReference>
<dbReference type="CAZy" id="GT2">
    <property type="family name" value="Glycosyltransferase Family 2"/>
</dbReference>
<dbReference type="KEGG" id="xom:XOO3782"/>
<dbReference type="PATRIC" id="fig|291331.8.peg.4442"/>
<dbReference type="HOGENOM" id="CLU_015730_1_0_6"/>
<dbReference type="UniPathway" id="UPA00637"/>
<dbReference type="GO" id="GO:0005886">
    <property type="term" value="C:plasma membrane"/>
    <property type="evidence" value="ECO:0007669"/>
    <property type="project" value="UniProtKB-SubCell"/>
</dbReference>
<dbReference type="GO" id="GO:0016758">
    <property type="term" value="F:hexosyltransferase activity"/>
    <property type="evidence" value="ECO:0007669"/>
    <property type="project" value="UniProtKB-UniRule"/>
</dbReference>
<dbReference type="GO" id="GO:0009250">
    <property type="term" value="P:glucan biosynthetic process"/>
    <property type="evidence" value="ECO:0007669"/>
    <property type="project" value="UniProtKB-UniRule"/>
</dbReference>
<dbReference type="CDD" id="cd04191">
    <property type="entry name" value="Glucan_BSP_MdoH"/>
    <property type="match status" value="1"/>
</dbReference>
<dbReference type="Gene3D" id="3.90.550.10">
    <property type="entry name" value="Spore Coat Polysaccharide Biosynthesis Protein SpsA, Chain A"/>
    <property type="match status" value="1"/>
</dbReference>
<dbReference type="HAMAP" id="MF_01072">
    <property type="entry name" value="MdoH_OpgH"/>
    <property type="match status" value="1"/>
</dbReference>
<dbReference type="InterPro" id="IPR023725">
    <property type="entry name" value="Glucans_biosynth_gluTrFase_H"/>
</dbReference>
<dbReference type="InterPro" id="IPR001173">
    <property type="entry name" value="Glyco_trans_2-like"/>
</dbReference>
<dbReference type="InterPro" id="IPR050321">
    <property type="entry name" value="Glycosyltr_2/OpgH_subfam"/>
</dbReference>
<dbReference type="InterPro" id="IPR029044">
    <property type="entry name" value="Nucleotide-diphossugar_trans"/>
</dbReference>
<dbReference type="NCBIfam" id="NF003957">
    <property type="entry name" value="PRK05454.1-4"/>
    <property type="match status" value="1"/>
</dbReference>
<dbReference type="NCBIfam" id="NF003958">
    <property type="entry name" value="PRK05454.2-1"/>
    <property type="match status" value="1"/>
</dbReference>
<dbReference type="NCBIfam" id="NF003962">
    <property type="entry name" value="PRK05454.2-5"/>
    <property type="match status" value="1"/>
</dbReference>
<dbReference type="PANTHER" id="PTHR43867">
    <property type="entry name" value="CELLULOSE SYNTHASE CATALYTIC SUBUNIT A [UDP-FORMING]"/>
    <property type="match status" value="1"/>
</dbReference>
<dbReference type="PANTHER" id="PTHR43867:SF5">
    <property type="entry name" value="GLUCANS BIOSYNTHESIS GLUCOSYLTRANSFERASE H"/>
    <property type="match status" value="1"/>
</dbReference>
<dbReference type="Pfam" id="PF13632">
    <property type="entry name" value="Glyco_trans_2_3"/>
    <property type="match status" value="1"/>
</dbReference>
<dbReference type="SUPFAM" id="SSF53448">
    <property type="entry name" value="Nucleotide-diphospho-sugar transferases"/>
    <property type="match status" value="1"/>
</dbReference>
<accession>Q2NYU0</accession>
<proteinExistence type="inferred from homology"/>
<evidence type="ECO:0000255" key="1">
    <source>
        <dbReference type="HAMAP-Rule" id="MF_01072"/>
    </source>
</evidence>
<evidence type="ECO:0000256" key="2">
    <source>
        <dbReference type="SAM" id="MobiDB-lite"/>
    </source>
</evidence>
<name>OPGH_XANOM</name>